<evidence type="ECO:0000256" key="1">
    <source>
        <dbReference type="SAM" id="MobiDB-lite"/>
    </source>
</evidence>
<evidence type="ECO:0000305" key="2"/>
<organism>
    <name type="scientific">Triticum aestivum</name>
    <name type="common">Wheat</name>
    <dbReference type="NCBI Taxonomy" id="4565"/>
    <lineage>
        <taxon>Eukaryota</taxon>
        <taxon>Viridiplantae</taxon>
        <taxon>Streptophyta</taxon>
        <taxon>Embryophyta</taxon>
        <taxon>Tracheophyta</taxon>
        <taxon>Spermatophyta</taxon>
        <taxon>Magnoliopsida</taxon>
        <taxon>Liliopsida</taxon>
        <taxon>Poales</taxon>
        <taxon>Poaceae</taxon>
        <taxon>BOP clade</taxon>
        <taxon>Pooideae</taxon>
        <taxon>Triticodae</taxon>
        <taxon>Triticeae</taxon>
        <taxon>Triticinae</taxon>
        <taxon>Triticum</taxon>
    </lineage>
</organism>
<protein>
    <recommendedName>
        <fullName>Glutenin, high molecular weight subunit 12</fullName>
    </recommendedName>
</protein>
<keyword id="KW-1015">Disulfide bond</keyword>
<keyword id="KW-1185">Reference proteome</keyword>
<keyword id="KW-0677">Repeat</keyword>
<keyword id="KW-0708">Seed storage protein</keyword>
<keyword id="KW-0732">Signal</keyword>
<keyword id="KW-0758">Storage protein</keyword>
<name>GLT3_WHEAT</name>
<feature type="signal peptide">
    <location>
        <begin position="1"/>
        <end position="21"/>
    </location>
</feature>
<feature type="chain" id="PRO_0000032208" description="Glutenin, high molecular weight subunit 12">
    <location>
        <begin position="22"/>
        <end position="660"/>
    </location>
</feature>
<feature type="region of interest" description="Disordered" evidence="1">
    <location>
        <begin position="127"/>
        <end position="660"/>
    </location>
</feature>
<feature type="compositionally biased region" description="Polar residues" evidence="1">
    <location>
        <begin position="127"/>
        <end position="136"/>
    </location>
</feature>
<feature type="compositionally biased region" description="Low complexity" evidence="1">
    <location>
        <begin position="141"/>
        <end position="166"/>
    </location>
</feature>
<feature type="compositionally biased region" description="Low complexity" evidence="1">
    <location>
        <begin position="187"/>
        <end position="200"/>
    </location>
</feature>
<feature type="compositionally biased region" description="Low complexity" evidence="1">
    <location>
        <begin position="208"/>
        <end position="248"/>
    </location>
</feature>
<feature type="compositionally biased region" description="Low complexity" evidence="1">
    <location>
        <begin position="255"/>
        <end position="275"/>
    </location>
</feature>
<feature type="compositionally biased region" description="Polar residues" evidence="1">
    <location>
        <begin position="276"/>
        <end position="286"/>
    </location>
</feature>
<feature type="compositionally biased region" description="Low complexity" evidence="1">
    <location>
        <begin position="296"/>
        <end position="365"/>
    </location>
</feature>
<feature type="compositionally biased region" description="Polar residues" evidence="1">
    <location>
        <begin position="370"/>
        <end position="384"/>
    </location>
</feature>
<feature type="compositionally biased region" description="Low complexity" evidence="1">
    <location>
        <begin position="385"/>
        <end position="426"/>
    </location>
</feature>
<feature type="compositionally biased region" description="Low complexity" evidence="1">
    <location>
        <begin position="478"/>
        <end position="514"/>
    </location>
</feature>
<feature type="compositionally biased region" description="Low complexity" evidence="1">
    <location>
        <begin position="522"/>
        <end position="535"/>
    </location>
</feature>
<feature type="compositionally biased region" description="Low complexity" evidence="1">
    <location>
        <begin position="551"/>
        <end position="577"/>
    </location>
</feature>
<feature type="compositionally biased region" description="Gly residues" evidence="1">
    <location>
        <begin position="590"/>
        <end position="604"/>
    </location>
</feature>
<accession>P08488</accession>
<dbReference type="EMBL" id="X03041">
    <property type="protein sequence ID" value="CAA26847.1"/>
    <property type="molecule type" value="Genomic_DNA"/>
</dbReference>
<dbReference type="PIR" id="A24266">
    <property type="entry name" value="A24266"/>
</dbReference>
<dbReference type="SMR" id="P08488"/>
<dbReference type="STRING" id="4565.P08488"/>
<dbReference type="Allergome" id="2898">
    <property type="allergen name" value="Tri a 26"/>
</dbReference>
<dbReference type="PaxDb" id="4565-Traes_1DL_D861501F5.1"/>
<dbReference type="Proteomes" id="UP000019116">
    <property type="component" value="Unplaced"/>
</dbReference>
<dbReference type="GO" id="GO:0045735">
    <property type="term" value="F:nutrient reservoir activity"/>
    <property type="evidence" value="ECO:0007669"/>
    <property type="project" value="UniProtKB-KW"/>
</dbReference>
<dbReference type="CDD" id="cd00261">
    <property type="entry name" value="AAI_SS"/>
    <property type="match status" value="1"/>
</dbReference>
<dbReference type="Gene3D" id="1.10.110.10">
    <property type="entry name" value="Plant lipid-transfer and hydrophobic proteins"/>
    <property type="match status" value="1"/>
</dbReference>
<dbReference type="InterPro" id="IPR036312">
    <property type="entry name" value="Bifun_inhib/LTP/seed_sf"/>
</dbReference>
<dbReference type="InterPro" id="IPR001419">
    <property type="entry name" value="Glutenin"/>
</dbReference>
<dbReference type="PANTHER" id="PTHR34481:SF14">
    <property type="entry name" value="GLUTENIN, HIGH MOLECULAR WEIGHT SUBUNIT DX5"/>
    <property type="match status" value="1"/>
</dbReference>
<dbReference type="PANTHER" id="PTHR34481">
    <property type="entry name" value="TRYPSIN/FACTOR XIIA INHIBITOR-RELATED"/>
    <property type="match status" value="1"/>
</dbReference>
<dbReference type="Pfam" id="PF03157">
    <property type="entry name" value="Glutenin_hmw"/>
    <property type="match status" value="3"/>
</dbReference>
<dbReference type="PRINTS" id="PR00210">
    <property type="entry name" value="GLUTENIN"/>
</dbReference>
<dbReference type="SUPFAM" id="SSF47699">
    <property type="entry name" value="Bifunctional inhibitor/lipid-transfer protein/seed storage 2S albumin"/>
    <property type="match status" value="1"/>
</dbReference>
<reference key="1">
    <citation type="journal article" date="1985" name="Nucleic Acids Res.">
        <title>Nucleotide sequence of a gene from chromosome 1D of wheat encoding a HMW-glutenin subunit.</title>
        <authorList>
            <person name="Thompson R.D."/>
            <person name="Bartels D."/>
            <person name="Harberd N.P."/>
        </authorList>
    </citation>
    <scope>NUCLEOTIDE SEQUENCE [GENOMIC DNA]</scope>
    <source>
        <strain>cv. Chinese Spring</strain>
    </source>
</reference>
<reference key="2">
    <citation type="journal article" date="1989" name="Biochem. J.">
        <title>Conformational differences between two wheat (Triticum aestivum) 'high-molecular-weight' glutenin subunits are due to a short region containing six amino acid differences.</title>
        <authorList>
            <person name="Goldsbrough A.P."/>
            <person name="Bulleid N.J."/>
            <person name="Freedman R.B."/>
            <person name="Flavell R.B."/>
        </authorList>
    </citation>
    <scope>NUCLEOTIDE SEQUENCE [GENOMIC DNA] OF 126-660</scope>
</reference>
<proteinExistence type="inferred from homology"/>
<comment type="function">
    <text>Glutenins are high-molecular weight seed storage proteins of wheat endosperm. Thought to be responsible for the visco-elastic property of wheat dough.</text>
</comment>
<comment type="subunit">
    <text>Disulfide-bridge linked aggregates.</text>
</comment>
<comment type="miscellaneous">
    <text>Glutenins are coded by several genes on each of the group 1 chromosomes of wheat.</text>
</comment>
<comment type="miscellaneous">
    <text>The mature protein is characterized by a large number of well preserved repeats of the two motifs: GQQPGQ and GQQPGQGQQGYYPTS.</text>
</comment>
<comment type="similarity">
    <text evidence="2">Belongs to the gliadin/glutenin family.</text>
</comment>
<sequence>MAKRLVLFAAVVIALVALTTAEGEASRQLQCERELQESSLEACRQVVDQQLAGRLPWSTGLQMRCCQQLRDVSAKCRSVAVSQVARQYEQTVVPPKGGSFYPGETTPLQQLQQGIFWGTSSQTVQGYYPSVTSPRQGSYYPGQASPQQPGQGQQPGKWQEPGQGQQWYYPTSLQQPGQGQQIGKGKQGYYPTSLQQPGQGQQIGQGQQGYYPTSPQHTGQRQQPVQGQQIGQGQQPEQGQQPGQWQQGYYPTSPQQLGQGQQPGQWQQSGQGQQGHYPTSLQQPGQGQQGHYLASQQQPAQGQQGHYPASQQQPGQGQQGHYPASQQQPGQGQQGHYPASQQEPGQGQQGQIPASQQQPGQGQQGHYPASLQQPGQQGHYPTSLQQLGQGQQIGQPGQKQQPGQGQQTGQGQQPEQEQQPGQGQQGYYPTSLQQPGQGQQQGQGQQGYYPTSLQQPGQGQQGHYPASLQQPGQGQGQPGQRQQPGQGQHPEQGQQPGQGQQGYYPTSPQQPGQGQQLGQGQQGYYPTSPQQPGQGQQPGQGQQGHCPMSPQQTGQAQQLGQGQQIGQVQQPGQGQQGYYPTSLQQPGQGQQSGQGQQSGQGHQPGQGQQSGQEKQGYDSPYHVSAEQQAASPMVAKAQQPATQLPTVCRMEGGDALSASQ</sequence>